<organism>
    <name type="scientific">Bacillus subtilis (strain 168)</name>
    <dbReference type="NCBI Taxonomy" id="224308"/>
    <lineage>
        <taxon>Bacteria</taxon>
        <taxon>Bacillati</taxon>
        <taxon>Bacillota</taxon>
        <taxon>Bacilli</taxon>
        <taxon>Bacillales</taxon>
        <taxon>Bacillaceae</taxon>
        <taxon>Bacillus</taxon>
    </lineage>
</organism>
<dbReference type="EMBL" id="D84432">
    <property type="protein sequence ID" value="BAA12469.1"/>
    <property type="status" value="ALT_INIT"/>
    <property type="molecule type" value="Genomic_DNA"/>
</dbReference>
<dbReference type="EMBL" id="D83717">
    <property type="protein sequence ID" value="BAA12081.1"/>
    <property type="status" value="ALT_INIT"/>
    <property type="molecule type" value="Genomic_DNA"/>
</dbReference>
<dbReference type="EMBL" id="AL009126">
    <property type="protein sequence ID" value="CAB14484.2"/>
    <property type="molecule type" value="Genomic_DNA"/>
</dbReference>
<dbReference type="PIR" id="F69952">
    <property type="entry name" value="F69952"/>
</dbReference>
<dbReference type="RefSeq" id="NP_390420.2">
    <property type="nucleotide sequence ID" value="NC_000964.3"/>
</dbReference>
<dbReference type="RefSeq" id="WP_003230019.1">
    <property type="nucleotide sequence ID" value="NZ_OZ025638.1"/>
</dbReference>
<dbReference type="FunCoup" id="P54463">
    <property type="interactions" value="29"/>
</dbReference>
<dbReference type="STRING" id="224308.BSU25420"/>
<dbReference type="TCDB" id="2.A.58.2.5">
    <property type="family name" value="the phosphate:na(+) symporter (pnas) family"/>
</dbReference>
<dbReference type="PaxDb" id="224308-BSU25420"/>
<dbReference type="EnsemblBacteria" id="CAB14484">
    <property type="protein sequence ID" value="CAB14484"/>
    <property type="gene ID" value="BSU_25420"/>
</dbReference>
<dbReference type="GeneID" id="937858"/>
<dbReference type="KEGG" id="bsu:BSU25420"/>
<dbReference type="PATRIC" id="fig|224308.179.peg.2763"/>
<dbReference type="eggNOG" id="COG1283">
    <property type="taxonomic scope" value="Bacteria"/>
</dbReference>
<dbReference type="InParanoid" id="P54463"/>
<dbReference type="OrthoDB" id="9763003at2"/>
<dbReference type="PhylomeDB" id="P54463"/>
<dbReference type="BioCyc" id="BSUB:BSU25420-MONOMER"/>
<dbReference type="Proteomes" id="UP000001570">
    <property type="component" value="Chromosome"/>
</dbReference>
<dbReference type="GO" id="GO:0005886">
    <property type="term" value="C:plasma membrane"/>
    <property type="evidence" value="ECO:0007669"/>
    <property type="project" value="UniProtKB-SubCell"/>
</dbReference>
<dbReference type="GO" id="GO:0005436">
    <property type="term" value="F:sodium:phosphate symporter activity"/>
    <property type="evidence" value="ECO:0007669"/>
    <property type="project" value="InterPro"/>
</dbReference>
<dbReference type="GO" id="GO:0044341">
    <property type="term" value="P:sodium-dependent phosphate transport"/>
    <property type="evidence" value="ECO:0007669"/>
    <property type="project" value="InterPro"/>
</dbReference>
<dbReference type="InterPro" id="IPR003841">
    <property type="entry name" value="Na/Pi_transpt"/>
</dbReference>
<dbReference type="InterPro" id="IPR004633">
    <property type="entry name" value="NaPi_cotrn-rel/YqeW-like"/>
</dbReference>
<dbReference type="NCBIfam" id="NF037997">
    <property type="entry name" value="Na_Pi_symport"/>
    <property type="match status" value="1"/>
</dbReference>
<dbReference type="NCBIfam" id="TIGR00704">
    <property type="entry name" value="NaPi_cotrn_rel"/>
    <property type="match status" value="1"/>
</dbReference>
<dbReference type="PANTHER" id="PTHR10010:SF46">
    <property type="entry name" value="SODIUM-DEPENDENT PHOSPHATE TRANSPORT PROTEIN 2B"/>
    <property type="match status" value="1"/>
</dbReference>
<dbReference type="PANTHER" id="PTHR10010">
    <property type="entry name" value="SOLUTE CARRIER FAMILY 34 SODIUM PHOSPHATE , MEMBER 2-RELATED"/>
    <property type="match status" value="1"/>
</dbReference>
<dbReference type="Pfam" id="PF02690">
    <property type="entry name" value="Na_Pi_cotrans"/>
    <property type="match status" value="2"/>
</dbReference>
<name>YQEW_BACSU</name>
<proteinExistence type="inferred from homology"/>
<keyword id="KW-1003">Cell membrane</keyword>
<keyword id="KW-0472">Membrane</keyword>
<keyword id="KW-1185">Reference proteome</keyword>
<keyword id="KW-0812">Transmembrane</keyword>
<keyword id="KW-1133">Transmembrane helix</keyword>
<reference key="1">
    <citation type="journal article" date="1996" name="Microbiology">
        <title>Systematic sequencing of the 283 kb 210 degrees-232 degrees region of the Bacillus subtilis genome containing the skin element and many sporulation genes.</title>
        <authorList>
            <person name="Mizuno M."/>
            <person name="Masuda S."/>
            <person name="Takemaru K."/>
            <person name="Hosono S."/>
            <person name="Sato T."/>
            <person name="Takeuchi M."/>
            <person name="Kobayashi Y."/>
        </authorList>
    </citation>
    <scope>NUCLEOTIDE SEQUENCE [GENOMIC DNA]</scope>
    <source>
        <strain>168 / JH642</strain>
    </source>
</reference>
<reference key="2">
    <citation type="journal article" date="1997" name="J. Bacteriol.">
        <title>The dnaK operon of Bacillus subtilis is heptacistronic.</title>
        <authorList>
            <person name="Homuth G."/>
            <person name="Masuda S."/>
            <person name="Mogk A."/>
            <person name="Kobayashi Y."/>
            <person name="Schumann W."/>
        </authorList>
    </citation>
    <scope>NUCLEOTIDE SEQUENCE [GENOMIC DNA]</scope>
    <source>
        <strain>168 / JH642</strain>
    </source>
</reference>
<reference key="3">
    <citation type="journal article" date="1997" name="Nature">
        <title>The complete genome sequence of the Gram-positive bacterium Bacillus subtilis.</title>
        <authorList>
            <person name="Kunst F."/>
            <person name="Ogasawara N."/>
            <person name="Moszer I."/>
            <person name="Albertini A.M."/>
            <person name="Alloni G."/>
            <person name="Azevedo V."/>
            <person name="Bertero M.G."/>
            <person name="Bessieres P."/>
            <person name="Bolotin A."/>
            <person name="Borchert S."/>
            <person name="Borriss R."/>
            <person name="Boursier L."/>
            <person name="Brans A."/>
            <person name="Braun M."/>
            <person name="Brignell S.C."/>
            <person name="Bron S."/>
            <person name="Brouillet S."/>
            <person name="Bruschi C.V."/>
            <person name="Caldwell B."/>
            <person name="Capuano V."/>
            <person name="Carter N.M."/>
            <person name="Choi S.-K."/>
            <person name="Codani J.-J."/>
            <person name="Connerton I.F."/>
            <person name="Cummings N.J."/>
            <person name="Daniel R.A."/>
            <person name="Denizot F."/>
            <person name="Devine K.M."/>
            <person name="Duesterhoeft A."/>
            <person name="Ehrlich S.D."/>
            <person name="Emmerson P.T."/>
            <person name="Entian K.-D."/>
            <person name="Errington J."/>
            <person name="Fabret C."/>
            <person name="Ferrari E."/>
            <person name="Foulger D."/>
            <person name="Fritz C."/>
            <person name="Fujita M."/>
            <person name="Fujita Y."/>
            <person name="Fuma S."/>
            <person name="Galizzi A."/>
            <person name="Galleron N."/>
            <person name="Ghim S.-Y."/>
            <person name="Glaser P."/>
            <person name="Goffeau A."/>
            <person name="Golightly E.J."/>
            <person name="Grandi G."/>
            <person name="Guiseppi G."/>
            <person name="Guy B.J."/>
            <person name="Haga K."/>
            <person name="Haiech J."/>
            <person name="Harwood C.R."/>
            <person name="Henaut A."/>
            <person name="Hilbert H."/>
            <person name="Holsappel S."/>
            <person name="Hosono S."/>
            <person name="Hullo M.-F."/>
            <person name="Itaya M."/>
            <person name="Jones L.-M."/>
            <person name="Joris B."/>
            <person name="Karamata D."/>
            <person name="Kasahara Y."/>
            <person name="Klaerr-Blanchard M."/>
            <person name="Klein C."/>
            <person name="Kobayashi Y."/>
            <person name="Koetter P."/>
            <person name="Koningstein G."/>
            <person name="Krogh S."/>
            <person name="Kumano M."/>
            <person name="Kurita K."/>
            <person name="Lapidus A."/>
            <person name="Lardinois S."/>
            <person name="Lauber J."/>
            <person name="Lazarevic V."/>
            <person name="Lee S.-M."/>
            <person name="Levine A."/>
            <person name="Liu H."/>
            <person name="Masuda S."/>
            <person name="Mauel C."/>
            <person name="Medigue C."/>
            <person name="Medina N."/>
            <person name="Mellado R.P."/>
            <person name="Mizuno M."/>
            <person name="Moestl D."/>
            <person name="Nakai S."/>
            <person name="Noback M."/>
            <person name="Noone D."/>
            <person name="O'Reilly M."/>
            <person name="Ogawa K."/>
            <person name="Ogiwara A."/>
            <person name="Oudega B."/>
            <person name="Park S.-H."/>
            <person name="Parro V."/>
            <person name="Pohl T.M."/>
            <person name="Portetelle D."/>
            <person name="Porwollik S."/>
            <person name="Prescott A.M."/>
            <person name="Presecan E."/>
            <person name="Pujic P."/>
            <person name="Purnelle B."/>
            <person name="Rapoport G."/>
            <person name="Rey M."/>
            <person name="Reynolds S."/>
            <person name="Rieger M."/>
            <person name="Rivolta C."/>
            <person name="Rocha E."/>
            <person name="Roche B."/>
            <person name="Rose M."/>
            <person name="Sadaie Y."/>
            <person name="Sato T."/>
            <person name="Scanlan E."/>
            <person name="Schleich S."/>
            <person name="Schroeter R."/>
            <person name="Scoffone F."/>
            <person name="Sekiguchi J."/>
            <person name="Sekowska A."/>
            <person name="Seror S.J."/>
            <person name="Serror P."/>
            <person name="Shin B.-S."/>
            <person name="Soldo B."/>
            <person name="Sorokin A."/>
            <person name="Tacconi E."/>
            <person name="Takagi T."/>
            <person name="Takahashi H."/>
            <person name="Takemaru K."/>
            <person name="Takeuchi M."/>
            <person name="Tamakoshi A."/>
            <person name="Tanaka T."/>
            <person name="Terpstra P."/>
            <person name="Tognoni A."/>
            <person name="Tosato V."/>
            <person name="Uchiyama S."/>
            <person name="Vandenbol M."/>
            <person name="Vannier F."/>
            <person name="Vassarotti A."/>
            <person name="Viari A."/>
            <person name="Wambutt R."/>
            <person name="Wedler E."/>
            <person name="Wedler H."/>
            <person name="Weitzenegger T."/>
            <person name="Winters P."/>
            <person name="Wipat A."/>
            <person name="Yamamoto H."/>
            <person name="Yamane K."/>
            <person name="Yasumoto K."/>
            <person name="Yata K."/>
            <person name="Yoshida K."/>
            <person name="Yoshikawa H.-F."/>
            <person name="Zumstein E."/>
            <person name="Yoshikawa H."/>
            <person name="Danchin A."/>
        </authorList>
    </citation>
    <scope>NUCLEOTIDE SEQUENCE [LARGE SCALE GENOMIC DNA]</scope>
    <source>
        <strain>168</strain>
    </source>
</reference>
<reference key="4">
    <citation type="journal article" date="2009" name="Microbiology">
        <title>From a consortium sequence to a unified sequence: the Bacillus subtilis 168 reference genome a decade later.</title>
        <authorList>
            <person name="Barbe V."/>
            <person name="Cruveiller S."/>
            <person name="Kunst F."/>
            <person name="Lenoble P."/>
            <person name="Meurice G."/>
            <person name="Sekowska A."/>
            <person name="Vallenet D."/>
            <person name="Wang T."/>
            <person name="Moszer I."/>
            <person name="Medigue C."/>
            <person name="Danchin A."/>
        </authorList>
    </citation>
    <scope>SEQUENCE REVISION TO 13</scope>
</reference>
<protein>
    <recommendedName>
        <fullName>Uncharacterized protein YqeW</fullName>
    </recommendedName>
</protein>
<evidence type="ECO:0000255" key="1"/>
<evidence type="ECO:0000305" key="2"/>
<comment type="subcellular location">
    <subcellularLocation>
        <location evidence="2">Cell membrane</location>
        <topology evidence="1">Multi-pass membrane protein</topology>
    </subcellularLocation>
</comment>
<comment type="sequence caution" evidence="2">
    <conflict type="erroneous initiation">
        <sequence resource="EMBL-CDS" id="BAA12081"/>
    </conflict>
    <text>Extended N-terminus.</text>
</comment>
<comment type="sequence caution" evidence="2">
    <conflict type="erroneous initiation">
        <sequence resource="EMBL-CDS" id="BAA12469"/>
    </conflict>
    <text>Extended N-terminus.</text>
</comment>
<sequence>MLILISFTALILFFLAGMNMLRKGLISMAYSKIEERLLLFTDHPLKAFLISIVFTGILQSSSAFMVIVIGFVSAGVLSFKRTIPMILGTNVGSTFTTEFIAIKMDIVIWVLLIGGLLFFLTGRYPLKQLGTSFLGLGIIFFCISGFSHLAGPLTKLKTGADVLYHVNDSNWSALLIGMVLTAIIHSSSVCIGILMSFMNEGIIGLTQAMSVVLGSNIGTCITAVMAAVSGGYAAKQTAYAHVVFNVLGVALVLPFLTAATGFVEQLSPDPAQKIAHFSLLFNVVTALLFLPLTNLFYRLIHLLIPAK</sequence>
<accession>P54463</accession>
<gene>
    <name type="primary">yqeW</name>
    <name type="ordered locus">BSU25420</name>
</gene>
<feature type="chain" id="PRO_0000049790" description="Uncharacterized protein YqeW">
    <location>
        <begin position="1"/>
        <end position="307"/>
    </location>
</feature>
<feature type="transmembrane region" description="Helical" evidence="1">
    <location>
        <begin position="1"/>
        <end position="21"/>
    </location>
</feature>
<feature type="transmembrane region" description="Helical" evidence="1">
    <location>
        <begin position="52"/>
        <end position="72"/>
    </location>
</feature>
<feature type="transmembrane region" description="Helical" evidence="1">
    <location>
        <begin position="99"/>
        <end position="119"/>
    </location>
</feature>
<feature type="transmembrane region" description="Helical" evidence="1">
    <location>
        <begin position="133"/>
        <end position="153"/>
    </location>
</feature>
<feature type="transmembrane region" description="Helical" evidence="1">
    <location>
        <begin position="174"/>
        <end position="194"/>
    </location>
</feature>
<feature type="transmembrane region" description="Helical" evidence="1">
    <location>
        <begin position="208"/>
        <end position="228"/>
    </location>
</feature>
<feature type="transmembrane region" description="Helical" evidence="1">
    <location>
        <begin position="242"/>
        <end position="262"/>
    </location>
</feature>
<feature type="transmembrane region" description="Helical" evidence="1">
    <location>
        <begin position="277"/>
        <end position="297"/>
    </location>
</feature>
<feature type="sequence conflict" description="In Ref. 1; BAA12469 and 2; BAA12081." evidence="2" ref="1 2">
    <original>F</original>
    <variation>S</variation>
    <location>
        <position position="13"/>
    </location>
</feature>